<reference key="1">
    <citation type="journal article" date="2010" name="Genome Biol.">
        <title>Structure and dynamics of the pan-genome of Streptococcus pneumoniae and closely related species.</title>
        <authorList>
            <person name="Donati C."/>
            <person name="Hiller N.L."/>
            <person name="Tettelin H."/>
            <person name="Muzzi A."/>
            <person name="Croucher N.J."/>
            <person name="Angiuoli S.V."/>
            <person name="Oggioni M."/>
            <person name="Dunning Hotopp J.C."/>
            <person name="Hu F.Z."/>
            <person name="Riley D.R."/>
            <person name="Covacci A."/>
            <person name="Mitchell T.J."/>
            <person name="Bentley S.D."/>
            <person name="Kilian M."/>
            <person name="Ehrlich G.D."/>
            <person name="Rappuoli R."/>
            <person name="Moxon E.R."/>
            <person name="Masignani V."/>
        </authorList>
    </citation>
    <scope>NUCLEOTIDE SEQUENCE [LARGE SCALE GENOMIC DNA]</scope>
    <source>
        <strain>P1031</strain>
    </source>
</reference>
<evidence type="ECO:0000255" key="1">
    <source>
        <dbReference type="HAMAP-Rule" id="MF_00016"/>
    </source>
</evidence>
<feature type="chain" id="PRO_1000116661" description="Holliday junction branch migration complex subunit RuvB">
    <location>
        <begin position="1"/>
        <end position="332"/>
    </location>
</feature>
<feature type="region of interest" description="Large ATPase domain (RuvB-L)" evidence="1">
    <location>
        <begin position="1"/>
        <end position="181"/>
    </location>
</feature>
<feature type="region of interest" description="Small ATPAse domain (RuvB-S)" evidence="1">
    <location>
        <begin position="182"/>
        <end position="252"/>
    </location>
</feature>
<feature type="region of interest" description="Head domain (RuvB-H)" evidence="1">
    <location>
        <begin position="255"/>
        <end position="332"/>
    </location>
</feature>
<feature type="binding site" evidence="1">
    <location>
        <position position="20"/>
    </location>
    <ligand>
        <name>ATP</name>
        <dbReference type="ChEBI" id="CHEBI:30616"/>
    </ligand>
</feature>
<feature type="binding site" evidence="1">
    <location>
        <position position="21"/>
    </location>
    <ligand>
        <name>ATP</name>
        <dbReference type="ChEBI" id="CHEBI:30616"/>
    </ligand>
</feature>
<feature type="binding site" evidence="1">
    <location>
        <position position="62"/>
    </location>
    <ligand>
        <name>ATP</name>
        <dbReference type="ChEBI" id="CHEBI:30616"/>
    </ligand>
</feature>
<feature type="binding site" evidence="1">
    <location>
        <position position="65"/>
    </location>
    <ligand>
        <name>ATP</name>
        <dbReference type="ChEBI" id="CHEBI:30616"/>
    </ligand>
</feature>
<feature type="binding site" evidence="1">
    <location>
        <position position="66"/>
    </location>
    <ligand>
        <name>ATP</name>
        <dbReference type="ChEBI" id="CHEBI:30616"/>
    </ligand>
</feature>
<feature type="binding site" evidence="1">
    <location>
        <position position="66"/>
    </location>
    <ligand>
        <name>Mg(2+)</name>
        <dbReference type="ChEBI" id="CHEBI:18420"/>
    </ligand>
</feature>
<feature type="binding site" evidence="1">
    <location>
        <position position="67"/>
    </location>
    <ligand>
        <name>ATP</name>
        <dbReference type="ChEBI" id="CHEBI:30616"/>
    </ligand>
</feature>
<feature type="binding site" evidence="1">
    <location>
        <begin position="128"/>
        <end position="130"/>
    </location>
    <ligand>
        <name>ATP</name>
        <dbReference type="ChEBI" id="CHEBI:30616"/>
    </ligand>
</feature>
<feature type="binding site" evidence="1">
    <location>
        <position position="171"/>
    </location>
    <ligand>
        <name>ATP</name>
        <dbReference type="ChEBI" id="CHEBI:30616"/>
    </ligand>
</feature>
<feature type="binding site" evidence="1">
    <location>
        <position position="181"/>
    </location>
    <ligand>
        <name>ATP</name>
        <dbReference type="ChEBI" id="CHEBI:30616"/>
    </ligand>
</feature>
<feature type="binding site" evidence="1">
    <location>
        <position position="218"/>
    </location>
    <ligand>
        <name>ATP</name>
        <dbReference type="ChEBI" id="CHEBI:30616"/>
    </ligand>
</feature>
<feature type="binding site" evidence="1">
    <location>
        <position position="291"/>
    </location>
    <ligand>
        <name>DNA</name>
        <dbReference type="ChEBI" id="CHEBI:16991"/>
    </ligand>
</feature>
<feature type="binding site" evidence="1">
    <location>
        <position position="310"/>
    </location>
    <ligand>
        <name>DNA</name>
        <dbReference type="ChEBI" id="CHEBI:16991"/>
    </ligand>
</feature>
<feature type="binding site" evidence="1">
    <location>
        <position position="312"/>
    </location>
    <ligand>
        <name>DNA</name>
        <dbReference type="ChEBI" id="CHEBI:16991"/>
    </ligand>
</feature>
<feature type="binding site" evidence="1">
    <location>
        <position position="315"/>
    </location>
    <ligand>
        <name>DNA</name>
        <dbReference type="ChEBI" id="CHEBI:16991"/>
    </ligand>
</feature>
<sequence>MSRILDNEIMGDEELVERTLRPQYLREYIGQDKVKDQLQIFIEAAKMRDEALDHVLLFGPPGLGKTTMAFVIANELGVNLKQTSGPVIEKAGDLVAILNELEPGDVLFIDEIHRLPMSVEEVLYSAMEDFYIDIMIGAGEGSRSVHLELPPFTLIGATTRAGMLSNPLRARFGITGHMEYYAHADLTEIVERTADIFEMEITHEAASELALRSRGTPRIANRLLKRVRDFAQIMGNGVIDDIITDKALTMLDVDHEGLDYVDQKILRTMIEMYSGGPVGLGTLSVNIAEERETVEDMYEPYLIQKGFIMRTRSGRVATAKAYEHLGYEYSEK</sequence>
<organism>
    <name type="scientific">Streptococcus pneumoniae (strain P1031)</name>
    <dbReference type="NCBI Taxonomy" id="488223"/>
    <lineage>
        <taxon>Bacteria</taxon>
        <taxon>Bacillati</taxon>
        <taxon>Bacillota</taxon>
        <taxon>Bacilli</taxon>
        <taxon>Lactobacillales</taxon>
        <taxon>Streptococcaceae</taxon>
        <taxon>Streptococcus</taxon>
    </lineage>
</organism>
<comment type="function">
    <text evidence="1">The RuvA-RuvB-RuvC complex processes Holliday junction (HJ) DNA during genetic recombination and DNA repair, while the RuvA-RuvB complex plays an important role in the rescue of blocked DNA replication forks via replication fork reversal (RFR). RuvA specifically binds to HJ cruciform DNA, conferring on it an open structure. The RuvB hexamer acts as an ATP-dependent pump, pulling dsDNA into and through the RuvAB complex. RuvB forms 2 homohexamers on either side of HJ DNA bound by 1 or 2 RuvA tetramers; 4 subunits per hexamer contact DNA at a time. Coordinated motions by a converter formed by DNA-disengaged RuvB subunits stimulates ATP hydrolysis and nucleotide exchange. Immobilization of the converter enables RuvB to convert the ATP-contained energy into a lever motion, pulling 2 nucleotides of DNA out of the RuvA tetramer per ATP hydrolyzed, thus driving DNA branch migration. The RuvB motors rotate together with the DNA substrate, which together with the progressing nucleotide cycle form the mechanistic basis for DNA recombination by continuous HJ branch migration. Branch migration allows RuvC to scan DNA until it finds its consensus sequence, where it cleaves and resolves cruciform DNA.</text>
</comment>
<comment type="catalytic activity">
    <reaction evidence="1">
        <text>ATP + H2O = ADP + phosphate + H(+)</text>
        <dbReference type="Rhea" id="RHEA:13065"/>
        <dbReference type="ChEBI" id="CHEBI:15377"/>
        <dbReference type="ChEBI" id="CHEBI:15378"/>
        <dbReference type="ChEBI" id="CHEBI:30616"/>
        <dbReference type="ChEBI" id="CHEBI:43474"/>
        <dbReference type="ChEBI" id="CHEBI:456216"/>
    </reaction>
</comment>
<comment type="subunit">
    <text evidence="1">Homohexamer. Forms an RuvA(8)-RuvB(12)-Holliday junction (HJ) complex. HJ DNA is sandwiched between 2 RuvA tetramers; dsDNA enters through RuvA and exits via RuvB. An RuvB hexamer assembles on each DNA strand where it exits the tetramer. Each RuvB hexamer is contacted by two RuvA subunits (via domain III) on 2 adjacent RuvB subunits; this complex drives branch migration. In the full resolvosome a probable DNA-RuvA(4)-RuvB(12)-RuvC(2) complex forms which resolves the HJ.</text>
</comment>
<comment type="subcellular location">
    <subcellularLocation>
        <location evidence="1">Cytoplasm</location>
    </subcellularLocation>
</comment>
<comment type="domain">
    <text evidence="1">Has 3 domains, the large (RuvB-L) and small ATPase (RuvB-S) domains and the C-terminal head (RuvB-H) domain. The head domain binds DNA, while the ATPase domains jointly bind ATP, ADP or are empty depending on the state of the subunit in the translocation cycle. During a single DNA translocation step the structure of each domain remains the same, but their relative positions change.</text>
</comment>
<comment type="similarity">
    <text evidence="1">Belongs to the RuvB family.</text>
</comment>
<keyword id="KW-0067">ATP-binding</keyword>
<keyword id="KW-0963">Cytoplasm</keyword>
<keyword id="KW-0227">DNA damage</keyword>
<keyword id="KW-0233">DNA recombination</keyword>
<keyword id="KW-0234">DNA repair</keyword>
<keyword id="KW-0238">DNA-binding</keyword>
<keyword id="KW-0378">Hydrolase</keyword>
<keyword id="KW-0547">Nucleotide-binding</keyword>
<name>RUVB_STRZP</name>
<accession>C1CIE0</accession>
<gene>
    <name evidence="1" type="primary">ruvB</name>
    <name type="ordered locus">SPP_0309</name>
</gene>
<protein>
    <recommendedName>
        <fullName evidence="1">Holliday junction branch migration complex subunit RuvB</fullName>
        <ecNumber evidence="1">3.6.4.-</ecNumber>
    </recommendedName>
</protein>
<proteinExistence type="inferred from homology"/>
<dbReference type="EC" id="3.6.4.-" evidence="1"/>
<dbReference type="EMBL" id="CP000920">
    <property type="protein sequence ID" value="ACO21898.1"/>
    <property type="molecule type" value="Genomic_DNA"/>
</dbReference>
<dbReference type="RefSeq" id="WP_001809468.1">
    <property type="nucleotide sequence ID" value="NC_012467.1"/>
</dbReference>
<dbReference type="SMR" id="C1CIE0"/>
<dbReference type="GeneID" id="45652263"/>
<dbReference type="KEGG" id="spp:SPP_0309"/>
<dbReference type="HOGENOM" id="CLU_055599_1_0_9"/>
<dbReference type="GO" id="GO:0005737">
    <property type="term" value="C:cytoplasm"/>
    <property type="evidence" value="ECO:0007669"/>
    <property type="project" value="UniProtKB-SubCell"/>
</dbReference>
<dbReference type="GO" id="GO:0048476">
    <property type="term" value="C:Holliday junction resolvase complex"/>
    <property type="evidence" value="ECO:0007669"/>
    <property type="project" value="UniProtKB-UniRule"/>
</dbReference>
<dbReference type="GO" id="GO:0005524">
    <property type="term" value="F:ATP binding"/>
    <property type="evidence" value="ECO:0007669"/>
    <property type="project" value="UniProtKB-UniRule"/>
</dbReference>
<dbReference type="GO" id="GO:0016887">
    <property type="term" value="F:ATP hydrolysis activity"/>
    <property type="evidence" value="ECO:0007669"/>
    <property type="project" value="InterPro"/>
</dbReference>
<dbReference type="GO" id="GO:0000400">
    <property type="term" value="F:four-way junction DNA binding"/>
    <property type="evidence" value="ECO:0007669"/>
    <property type="project" value="UniProtKB-UniRule"/>
</dbReference>
<dbReference type="GO" id="GO:0009378">
    <property type="term" value="F:four-way junction helicase activity"/>
    <property type="evidence" value="ECO:0007669"/>
    <property type="project" value="InterPro"/>
</dbReference>
<dbReference type="GO" id="GO:0006310">
    <property type="term" value="P:DNA recombination"/>
    <property type="evidence" value="ECO:0007669"/>
    <property type="project" value="UniProtKB-UniRule"/>
</dbReference>
<dbReference type="GO" id="GO:0006281">
    <property type="term" value="P:DNA repair"/>
    <property type="evidence" value="ECO:0007669"/>
    <property type="project" value="UniProtKB-UniRule"/>
</dbReference>
<dbReference type="CDD" id="cd00009">
    <property type="entry name" value="AAA"/>
    <property type="match status" value="1"/>
</dbReference>
<dbReference type="Gene3D" id="1.10.8.60">
    <property type="match status" value="1"/>
</dbReference>
<dbReference type="Gene3D" id="3.40.50.300">
    <property type="entry name" value="P-loop containing nucleotide triphosphate hydrolases"/>
    <property type="match status" value="1"/>
</dbReference>
<dbReference type="Gene3D" id="1.10.10.10">
    <property type="entry name" value="Winged helix-like DNA-binding domain superfamily/Winged helix DNA-binding domain"/>
    <property type="match status" value="1"/>
</dbReference>
<dbReference type="HAMAP" id="MF_00016">
    <property type="entry name" value="DNA_HJ_migration_RuvB"/>
    <property type="match status" value="1"/>
</dbReference>
<dbReference type="InterPro" id="IPR003593">
    <property type="entry name" value="AAA+_ATPase"/>
</dbReference>
<dbReference type="InterPro" id="IPR041445">
    <property type="entry name" value="AAA_lid_4"/>
</dbReference>
<dbReference type="InterPro" id="IPR004605">
    <property type="entry name" value="DNA_helicase_Holl-junc_RuvB"/>
</dbReference>
<dbReference type="InterPro" id="IPR027417">
    <property type="entry name" value="P-loop_NTPase"/>
</dbReference>
<dbReference type="InterPro" id="IPR008824">
    <property type="entry name" value="RuvB-like_N"/>
</dbReference>
<dbReference type="InterPro" id="IPR008823">
    <property type="entry name" value="RuvB_C"/>
</dbReference>
<dbReference type="InterPro" id="IPR036388">
    <property type="entry name" value="WH-like_DNA-bd_sf"/>
</dbReference>
<dbReference type="InterPro" id="IPR036390">
    <property type="entry name" value="WH_DNA-bd_sf"/>
</dbReference>
<dbReference type="NCBIfam" id="NF000868">
    <property type="entry name" value="PRK00080.1"/>
    <property type="match status" value="1"/>
</dbReference>
<dbReference type="NCBIfam" id="TIGR00635">
    <property type="entry name" value="ruvB"/>
    <property type="match status" value="1"/>
</dbReference>
<dbReference type="PANTHER" id="PTHR42848">
    <property type="match status" value="1"/>
</dbReference>
<dbReference type="PANTHER" id="PTHR42848:SF1">
    <property type="entry name" value="HOLLIDAY JUNCTION BRANCH MIGRATION COMPLEX SUBUNIT RUVB"/>
    <property type="match status" value="1"/>
</dbReference>
<dbReference type="Pfam" id="PF17864">
    <property type="entry name" value="AAA_lid_4"/>
    <property type="match status" value="1"/>
</dbReference>
<dbReference type="Pfam" id="PF05491">
    <property type="entry name" value="RuvB_C"/>
    <property type="match status" value="1"/>
</dbReference>
<dbReference type="Pfam" id="PF05496">
    <property type="entry name" value="RuvB_N"/>
    <property type="match status" value="1"/>
</dbReference>
<dbReference type="SMART" id="SM00382">
    <property type="entry name" value="AAA"/>
    <property type="match status" value="1"/>
</dbReference>
<dbReference type="SUPFAM" id="SSF52540">
    <property type="entry name" value="P-loop containing nucleoside triphosphate hydrolases"/>
    <property type="match status" value="1"/>
</dbReference>
<dbReference type="SUPFAM" id="SSF46785">
    <property type="entry name" value="Winged helix' DNA-binding domain"/>
    <property type="match status" value="1"/>
</dbReference>